<accession>B5BGW7</accession>
<gene>
    <name evidence="1" type="primary">rplO</name>
    <name type="ordered locus">SSPA3066</name>
</gene>
<sequence length="144" mass="14966">MRLNTLSPAEGSKKAGKRLGRGIGSGLGKTGGRGHKGQKSRSGGGVRRGFEGGQMPLYRRLPKFGFTSRKAAITAEVRLSDLAKVEGGVVDLNTLKAANIIGIQIEFAKVILAGEVTTPVTVRGLRVTKGARAAIEAAGGKIEE</sequence>
<protein>
    <recommendedName>
        <fullName evidence="1">Large ribosomal subunit protein uL15</fullName>
    </recommendedName>
    <alternativeName>
        <fullName evidence="3">50S ribosomal protein L15</fullName>
    </alternativeName>
</protein>
<dbReference type="EMBL" id="FM200053">
    <property type="protein sequence ID" value="CAR61317.1"/>
    <property type="molecule type" value="Genomic_DNA"/>
</dbReference>
<dbReference type="RefSeq" id="WP_001238917.1">
    <property type="nucleotide sequence ID" value="NC_011147.1"/>
</dbReference>
<dbReference type="SMR" id="B5BGW7"/>
<dbReference type="GeneID" id="93778686"/>
<dbReference type="KEGG" id="sek:SSPA3066"/>
<dbReference type="HOGENOM" id="CLU_055188_4_2_6"/>
<dbReference type="Proteomes" id="UP000001869">
    <property type="component" value="Chromosome"/>
</dbReference>
<dbReference type="GO" id="GO:0022625">
    <property type="term" value="C:cytosolic large ribosomal subunit"/>
    <property type="evidence" value="ECO:0007669"/>
    <property type="project" value="TreeGrafter"/>
</dbReference>
<dbReference type="GO" id="GO:0019843">
    <property type="term" value="F:rRNA binding"/>
    <property type="evidence" value="ECO:0007669"/>
    <property type="project" value="UniProtKB-UniRule"/>
</dbReference>
<dbReference type="GO" id="GO:0003735">
    <property type="term" value="F:structural constituent of ribosome"/>
    <property type="evidence" value="ECO:0007669"/>
    <property type="project" value="InterPro"/>
</dbReference>
<dbReference type="GO" id="GO:0006412">
    <property type="term" value="P:translation"/>
    <property type="evidence" value="ECO:0007669"/>
    <property type="project" value="UniProtKB-UniRule"/>
</dbReference>
<dbReference type="FunFam" id="3.100.10.10:FF:000003">
    <property type="entry name" value="50S ribosomal protein L15"/>
    <property type="match status" value="1"/>
</dbReference>
<dbReference type="Gene3D" id="3.100.10.10">
    <property type="match status" value="1"/>
</dbReference>
<dbReference type="HAMAP" id="MF_01341">
    <property type="entry name" value="Ribosomal_uL15"/>
    <property type="match status" value="1"/>
</dbReference>
<dbReference type="InterPro" id="IPR030878">
    <property type="entry name" value="Ribosomal_uL15"/>
</dbReference>
<dbReference type="InterPro" id="IPR021131">
    <property type="entry name" value="Ribosomal_uL15/eL18"/>
</dbReference>
<dbReference type="InterPro" id="IPR036227">
    <property type="entry name" value="Ribosomal_uL15/eL18_sf"/>
</dbReference>
<dbReference type="InterPro" id="IPR005749">
    <property type="entry name" value="Ribosomal_uL15_bac-type"/>
</dbReference>
<dbReference type="InterPro" id="IPR001196">
    <property type="entry name" value="Ribosomal_uL15_CS"/>
</dbReference>
<dbReference type="NCBIfam" id="TIGR01071">
    <property type="entry name" value="rplO_bact"/>
    <property type="match status" value="1"/>
</dbReference>
<dbReference type="PANTHER" id="PTHR12934">
    <property type="entry name" value="50S RIBOSOMAL PROTEIN L15"/>
    <property type="match status" value="1"/>
</dbReference>
<dbReference type="PANTHER" id="PTHR12934:SF11">
    <property type="entry name" value="LARGE RIBOSOMAL SUBUNIT PROTEIN UL15M"/>
    <property type="match status" value="1"/>
</dbReference>
<dbReference type="Pfam" id="PF00828">
    <property type="entry name" value="Ribosomal_L27A"/>
    <property type="match status" value="1"/>
</dbReference>
<dbReference type="SUPFAM" id="SSF52080">
    <property type="entry name" value="Ribosomal proteins L15p and L18e"/>
    <property type="match status" value="1"/>
</dbReference>
<dbReference type="PROSITE" id="PS00475">
    <property type="entry name" value="RIBOSOMAL_L15"/>
    <property type="match status" value="1"/>
</dbReference>
<feature type="chain" id="PRO_1000142878" description="Large ribosomal subunit protein uL15">
    <location>
        <begin position="1"/>
        <end position="144"/>
    </location>
</feature>
<feature type="region of interest" description="Disordered" evidence="2">
    <location>
        <begin position="1"/>
        <end position="54"/>
    </location>
</feature>
<feature type="compositionally biased region" description="Gly residues" evidence="2">
    <location>
        <begin position="21"/>
        <end position="31"/>
    </location>
</feature>
<evidence type="ECO:0000255" key="1">
    <source>
        <dbReference type="HAMAP-Rule" id="MF_01341"/>
    </source>
</evidence>
<evidence type="ECO:0000256" key="2">
    <source>
        <dbReference type="SAM" id="MobiDB-lite"/>
    </source>
</evidence>
<evidence type="ECO:0000305" key="3"/>
<comment type="function">
    <text evidence="1">Binds to the 23S rRNA.</text>
</comment>
<comment type="subunit">
    <text evidence="1">Part of the 50S ribosomal subunit.</text>
</comment>
<comment type="similarity">
    <text evidence="1">Belongs to the universal ribosomal protein uL15 family.</text>
</comment>
<organism>
    <name type="scientific">Salmonella paratyphi A (strain AKU_12601)</name>
    <dbReference type="NCBI Taxonomy" id="554290"/>
    <lineage>
        <taxon>Bacteria</taxon>
        <taxon>Pseudomonadati</taxon>
        <taxon>Pseudomonadota</taxon>
        <taxon>Gammaproteobacteria</taxon>
        <taxon>Enterobacterales</taxon>
        <taxon>Enterobacteriaceae</taxon>
        <taxon>Salmonella</taxon>
    </lineage>
</organism>
<name>RL15_SALPK</name>
<proteinExistence type="inferred from homology"/>
<reference key="1">
    <citation type="journal article" date="2009" name="BMC Genomics">
        <title>Pseudogene accumulation in the evolutionary histories of Salmonella enterica serovars Paratyphi A and Typhi.</title>
        <authorList>
            <person name="Holt K.E."/>
            <person name="Thomson N.R."/>
            <person name="Wain J."/>
            <person name="Langridge G.C."/>
            <person name="Hasan R."/>
            <person name="Bhutta Z.A."/>
            <person name="Quail M.A."/>
            <person name="Norbertczak H."/>
            <person name="Walker D."/>
            <person name="Simmonds M."/>
            <person name="White B."/>
            <person name="Bason N."/>
            <person name="Mungall K."/>
            <person name="Dougan G."/>
            <person name="Parkhill J."/>
        </authorList>
    </citation>
    <scope>NUCLEOTIDE SEQUENCE [LARGE SCALE GENOMIC DNA]</scope>
    <source>
        <strain>AKU_12601</strain>
    </source>
</reference>
<keyword id="KW-0687">Ribonucleoprotein</keyword>
<keyword id="KW-0689">Ribosomal protein</keyword>
<keyword id="KW-0694">RNA-binding</keyword>
<keyword id="KW-0699">rRNA-binding</keyword>